<comment type="function">
    <text>Core component of nucleosome. Nucleosomes wrap and compact DNA into chromatin, limiting DNA accessibility to the cellular machineries which require DNA as a template. Histones thereby play a central role in transcription regulation, DNA repair, DNA replication and chromosomal stability. DNA accessibility is regulated via a complex set of post-translational modifications of histones, also called histone code, and nucleosome remodeling.</text>
</comment>
<comment type="subunit">
    <text>The nucleosome is a histone octamer containing two molecules each of H2A, H2B, H3 and H4 assembled in one H3-H4 heterotetramer and two H2A-H2B heterodimers. The octamer wraps approximately 147 bp of DNA.</text>
</comment>
<comment type="subcellular location">
    <subcellularLocation>
        <location>Nucleus</location>
    </subcellularLocation>
    <subcellularLocation>
        <location>Chromosome</location>
    </subcellularLocation>
</comment>
<comment type="PTM">
    <text evidence="3">Monoubiquitination at the C-terminal Lys gives a specific tag for epigenetic transcriptional activation and is also prerequisite for histone H3 'Lys-4' and 'Lys-79' methylation.</text>
</comment>
<comment type="PTM">
    <text evidence="1">Phosphorylated on Ser-15 during apoptosis; which facilitates apoptotic chromatin condensation.</text>
</comment>
<comment type="similarity">
    <text evidence="6">Belongs to the histone H2B family.</text>
</comment>
<sequence>MPEPAKSAPAPKKGSKKAVTKTQKKGDKKRXXXXXXXXXXXXXXXXXXXXXXXXXXXXXXXXMNSFVNDIFERIAGEASRLAHYNKRSTITSR</sequence>
<accession>P02280</accession>
<evidence type="ECO:0000250" key="1">
    <source>
        <dbReference type="UniProtKB" id="P06900"/>
    </source>
</evidence>
<evidence type="ECO:0000250" key="2">
    <source>
        <dbReference type="UniProtKB" id="P0C1H4"/>
    </source>
</evidence>
<evidence type="ECO:0000250" key="3">
    <source>
        <dbReference type="UniProtKB" id="P33778"/>
    </source>
</evidence>
<evidence type="ECO:0000256" key="4">
    <source>
        <dbReference type="SAM" id="MobiDB-lite"/>
    </source>
</evidence>
<evidence type="ECO:0000269" key="5">
    <source>
    </source>
</evidence>
<evidence type="ECO:0000305" key="6"/>
<reference key="1">
    <citation type="journal article" date="1978" name="Biochim. Biophys. Acta">
        <title>Histone H2B variants from the erythrocytes of an amphibian, a reptile and a bird.</title>
        <authorList>
            <person name="van Helden P."/>
            <person name="Strickland W.N."/>
            <person name="Brandt W.F."/>
            <person name="von Holt C."/>
        </authorList>
    </citation>
    <scope>PROTEIN SEQUENCE OF 2-93</scope>
    <source>
        <tissue>Erythrocyte</tissue>
    </source>
</reference>
<name>H2B_CRONI</name>
<organism>
    <name type="scientific">Crocodylus niloticus</name>
    <name type="common">Nile crocodile</name>
    <name type="synonym">African crocodile</name>
    <dbReference type="NCBI Taxonomy" id="8501"/>
    <lineage>
        <taxon>Eukaryota</taxon>
        <taxon>Metazoa</taxon>
        <taxon>Chordata</taxon>
        <taxon>Craniata</taxon>
        <taxon>Vertebrata</taxon>
        <taxon>Euteleostomi</taxon>
        <taxon>Archelosauria</taxon>
        <taxon>Archosauria</taxon>
        <taxon>Crocodylia</taxon>
        <taxon>Longirostres</taxon>
        <taxon>Crocodylidae</taxon>
        <taxon>Crocodylus</taxon>
    </lineage>
</organism>
<proteinExistence type="evidence at protein level"/>
<keyword id="KW-0007">Acetylation</keyword>
<keyword id="KW-0158">Chromosome</keyword>
<keyword id="KW-0903">Direct protein sequencing</keyword>
<keyword id="KW-0238">DNA-binding</keyword>
<keyword id="KW-0544">Nucleosome core</keyword>
<keyword id="KW-0539">Nucleus</keyword>
<keyword id="KW-0597">Phosphoprotein</keyword>
<keyword id="KW-0832">Ubl conjugation</keyword>
<dbReference type="PIR" id="A02607">
    <property type="entry name" value="HSAK22"/>
</dbReference>
<dbReference type="GO" id="GO:0000786">
    <property type="term" value="C:nucleosome"/>
    <property type="evidence" value="ECO:0007669"/>
    <property type="project" value="UniProtKB-KW"/>
</dbReference>
<dbReference type="GO" id="GO:0005634">
    <property type="term" value="C:nucleus"/>
    <property type="evidence" value="ECO:0007669"/>
    <property type="project" value="UniProtKB-SubCell"/>
</dbReference>
<dbReference type="GO" id="GO:0003677">
    <property type="term" value="F:DNA binding"/>
    <property type="evidence" value="ECO:0007669"/>
    <property type="project" value="UniProtKB-KW"/>
</dbReference>
<dbReference type="GO" id="GO:0046982">
    <property type="term" value="F:protein heterodimerization activity"/>
    <property type="evidence" value="ECO:0007669"/>
    <property type="project" value="InterPro"/>
</dbReference>
<dbReference type="GO" id="GO:0030527">
    <property type="term" value="F:structural constituent of chromatin"/>
    <property type="evidence" value="ECO:0007669"/>
    <property type="project" value="InterPro"/>
</dbReference>
<dbReference type="Gene3D" id="1.10.20.10">
    <property type="entry name" value="Histone, subunit A"/>
    <property type="match status" value="1"/>
</dbReference>
<dbReference type="InterPro" id="IPR009072">
    <property type="entry name" value="Histone-fold"/>
</dbReference>
<dbReference type="InterPro" id="IPR007125">
    <property type="entry name" value="Histone_H2A/H2B/H3"/>
</dbReference>
<dbReference type="InterPro" id="IPR000558">
    <property type="entry name" value="Histone_H2B"/>
</dbReference>
<dbReference type="PANTHER" id="PTHR23428">
    <property type="entry name" value="HISTONE H2B"/>
    <property type="match status" value="1"/>
</dbReference>
<dbReference type="Pfam" id="PF00125">
    <property type="entry name" value="Histone"/>
    <property type="match status" value="1"/>
</dbReference>
<dbReference type="PRINTS" id="PR00621">
    <property type="entry name" value="HISTONEH2B"/>
</dbReference>
<dbReference type="SUPFAM" id="SSF47113">
    <property type="entry name" value="Histone-fold"/>
    <property type="match status" value="1"/>
</dbReference>
<feature type="initiator methionine" description="Removed" evidence="5">
    <location>
        <position position="1"/>
    </location>
</feature>
<feature type="chain" id="PRO_0000071847" description="Histone H2B">
    <location>
        <begin position="2"/>
        <end position="93" status="greater than"/>
    </location>
</feature>
<feature type="region of interest" description="Disordered" evidence="4">
    <location>
        <begin position="1"/>
        <end position="31"/>
    </location>
</feature>
<feature type="compositionally biased region" description="Low complexity" evidence="4">
    <location>
        <begin position="1"/>
        <end position="12"/>
    </location>
</feature>
<feature type="compositionally biased region" description="Basic residues" evidence="4">
    <location>
        <begin position="13"/>
        <end position="28"/>
    </location>
</feature>
<feature type="modified residue" description="N6-acetyllysine" evidence="2">
    <location>
        <position position="6"/>
    </location>
</feature>
<feature type="modified residue" description="N6-acetyllysine" evidence="2">
    <location>
        <position position="13"/>
    </location>
</feature>
<feature type="modified residue" description="Phosphoserine" evidence="1">
    <location>
        <position position="15"/>
    </location>
</feature>
<feature type="modified residue" description="N6-acetyllysine" evidence="2">
    <location>
        <position position="16"/>
    </location>
</feature>
<feature type="modified residue" description="N6-acetyllysine" evidence="2">
    <location>
        <position position="21"/>
    </location>
</feature>
<feature type="non-terminal residue">
    <location>
        <position position="93"/>
    </location>
</feature>
<protein>
    <recommendedName>
        <fullName>Histone H2B</fullName>
    </recommendedName>
</protein>